<protein>
    <recommendedName>
        <fullName evidence="1">Photosystem II reaction center protein I</fullName>
        <shortName evidence="1">PSII-I</shortName>
    </recommendedName>
    <alternativeName>
        <fullName evidence="1">PSII 4.8 kDa protein</fullName>
    </alternativeName>
</protein>
<sequence length="36" mass="4168">MLTLKLFVYTVVIFFVSLFIFGFLSNDPGRNPGREE</sequence>
<geneLocation type="chloroplast"/>
<reference key="1">
    <citation type="submission" date="2007-03" db="EMBL/GenBank/DDBJ databases">
        <title>Sequencing analysis of Aethionema coridifolium chloroplast DNA.</title>
        <authorList>
            <person name="Hosouchi T."/>
            <person name="Tsuruoka H."/>
            <person name="Kotani H."/>
        </authorList>
    </citation>
    <scope>NUCLEOTIDE SEQUENCE [LARGE SCALE GENOMIC DNA]</scope>
</reference>
<proteinExistence type="inferred from homology"/>
<accession>A4QJ99</accession>
<organism>
    <name type="scientific">Aethionema cordifolium</name>
    <name type="common">Lebanon stonecress</name>
    <dbReference type="NCBI Taxonomy" id="434059"/>
    <lineage>
        <taxon>Eukaryota</taxon>
        <taxon>Viridiplantae</taxon>
        <taxon>Streptophyta</taxon>
        <taxon>Embryophyta</taxon>
        <taxon>Tracheophyta</taxon>
        <taxon>Spermatophyta</taxon>
        <taxon>Magnoliopsida</taxon>
        <taxon>eudicotyledons</taxon>
        <taxon>Gunneridae</taxon>
        <taxon>Pentapetalae</taxon>
        <taxon>rosids</taxon>
        <taxon>malvids</taxon>
        <taxon>Brassicales</taxon>
        <taxon>Brassicaceae</taxon>
        <taxon>Aethionemeae</taxon>
        <taxon>Aethionema</taxon>
    </lineage>
</organism>
<evidence type="ECO:0000255" key="1">
    <source>
        <dbReference type="HAMAP-Rule" id="MF_01316"/>
    </source>
</evidence>
<comment type="function">
    <text evidence="1">One of the components of the core complex of photosystem II (PSII), required for its stability and/or assembly. PSII is a light-driven water:plastoquinone oxidoreductase that uses light energy to abstract electrons from H(2)O, generating O(2) and a proton gradient subsequently used for ATP formation. It consists of a core antenna complex that captures photons, and an electron transfer chain that converts photonic excitation into a charge separation.</text>
</comment>
<comment type="subunit">
    <text evidence="1">PSII is composed of 1 copy each of membrane proteins PsbA, PsbB, PsbC, PsbD, PsbE, PsbF, PsbH, PsbI, PsbJ, PsbK, PsbL, PsbM, PsbT, PsbX, PsbY, PsbZ, Psb30/Ycf12, at least 3 peripheral proteins of the oxygen-evolving complex and a large number of cofactors. It forms dimeric complexes.</text>
</comment>
<comment type="subcellular location">
    <subcellularLocation>
        <location evidence="1">Plastid</location>
        <location evidence="1">Chloroplast thylakoid membrane</location>
        <topology evidence="1">Single-pass membrane protein</topology>
    </subcellularLocation>
</comment>
<comment type="similarity">
    <text evidence="1">Belongs to the PsbI family.</text>
</comment>
<keyword id="KW-0150">Chloroplast</keyword>
<keyword id="KW-0472">Membrane</keyword>
<keyword id="KW-0602">Photosynthesis</keyword>
<keyword id="KW-0604">Photosystem II</keyword>
<keyword id="KW-0934">Plastid</keyword>
<keyword id="KW-0674">Reaction center</keyword>
<keyword id="KW-0793">Thylakoid</keyword>
<keyword id="KW-0812">Transmembrane</keyword>
<keyword id="KW-1133">Transmembrane helix</keyword>
<gene>
    <name evidence="1" type="primary">psbI</name>
</gene>
<feature type="chain" id="PRO_0000298311" description="Photosystem II reaction center protein I">
    <location>
        <begin position="1"/>
        <end position="36"/>
    </location>
</feature>
<feature type="transmembrane region" description="Helical" evidence="1">
    <location>
        <begin position="4"/>
        <end position="24"/>
    </location>
</feature>
<dbReference type="EMBL" id="AP009366">
    <property type="protein sequence ID" value="BAF49754.1"/>
    <property type="molecule type" value="Genomic_DNA"/>
</dbReference>
<dbReference type="RefSeq" id="YP_001122930.1">
    <property type="nucleotide sequence ID" value="NC_009265.1"/>
</dbReference>
<dbReference type="SMR" id="A4QJ99"/>
<dbReference type="GeneID" id="4968591"/>
<dbReference type="GO" id="GO:0009535">
    <property type="term" value="C:chloroplast thylakoid membrane"/>
    <property type="evidence" value="ECO:0007669"/>
    <property type="project" value="UniProtKB-SubCell"/>
</dbReference>
<dbReference type="GO" id="GO:0009539">
    <property type="term" value="C:photosystem II reaction center"/>
    <property type="evidence" value="ECO:0007669"/>
    <property type="project" value="InterPro"/>
</dbReference>
<dbReference type="GO" id="GO:0015979">
    <property type="term" value="P:photosynthesis"/>
    <property type="evidence" value="ECO:0007669"/>
    <property type="project" value="UniProtKB-UniRule"/>
</dbReference>
<dbReference type="HAMAP" id="MF_01316">
    <property type="entry name" value="PSII_PsbI"/>
    <property type="match status" value="1"/>
</dbReference>
<dbReference type="InterPro" id="IPR003686">
    <property type="entry name" value="PSII_PsbI"/>
</dbReference>
<dbReference type="InterPro" id="IPR037271">
    <property type="entry name" value="PSII_PsbI_sf"/>
</dbReference>
<dbReference type="NCBIfam" id="NF002735">
    <property type="entry name" value="PRK02655.1"/>
    <property type="match status" value="1"/>
</dbReference>
<dbReference type="PANTHER" id="PTHR35772">
    <property type="entry name" value="PHOTOSYSTEM II REACTION CENTER PROTEIN I"/>
    <property type="match status" value="1"/>
</dbReference>
<dbReference type="PANTHER" id="PTHR35772:SF1">
    <property type="entry name" value="PHOTOSYSTEM II REACTION CENTER PROTEIN I"/>
    <property type="match status" value="1"/>
</dbReference>
<dbReference type="Pfam" id="PF02532">
    <property type="entry name" value="PsbI"/>
    <property type="match status" value="1"/>
</dbReference>
<dbReference type="SUPFAM" id="SSF161041">
    <property type="entry name" value="Photosystem II reaction center protein I, PsbI"/>
    <property type="match status" value="1"/>
</dbReference>
<name>PSBI_AETCO</name>